<gene>
    <name evidence="1" type="primary">argC</name>
    <name type="ordered locus">Mmc1_0248</name>
</gene>
<feature type="chain" id="PRO_1000011006" description="N-acetyl-gamma-glutamyl-phosphate reductase">
    <location>
        <begin position="1"/>
        <end position="349"/>
    </location>
</feature>
<feature type="active site" evidence="1">
    <location>
        <position position="153"/>
    </location>
</feature>
<sequence length="349" mass="37862">MGRTLRVAILGATGYTGGELIRLLHRHPGAELSFVSSERFAGQSIAKVYTHLQAVGHLICQPMDAKKACEAADFIFCALPHVTSMEVVPELLQRGAKVVDLSADFRLKSAETYAHWYGTQHLAPELLPQAAYGLPELFRESIKGANLVANPGCYPTSVQLPLFPLLQEGMIDPALVIADSKSGVSGAGRSPAQGTLFAELSEGFKAYKVEAHRHIPEMEQNLALAAGKEIKIRFTPHLLPQSRGILSTCYLRPTSGVNAQRVRDTLMTRYRDEPFVTVLPHGDMPATSDVRGSNACHMGVTEDLRSGWLIIVSVIDNLVKGASGAAVQNFNLMTGWDETTALDSLPMFP</sequence>
<evidence type="ECO:0000255" key="1">
    <source>
        <dbReference type="HAMAP-Rule" id="MF_00150"/>
    </source>
</evidence>
<reference key="1">
    <citation type="journal article" date="2009" name="Appl. Environ. Microbiol.">
        <title>Complete genome sequence of the chemolithoautotrophic marine magnetotactic coccus strain MC-1.</title>
        <authorList>
            <person name="Schubbe S."/>
            <person name="Williams T.J."/>
            <person name="Xie G."/>
            <person name="Kiss H.E."/>
            <person name="Brettin T.S."/>
            <person name="Martinez D."/>
            <person name="Ross C.A."/>
            <person name="Schuler D."/>
            <person name="Cox B.L."/>
            <person name="Nealson K.H."/>
            <person name="Bazylinski D.A."/>
        </authorList>
    </citation>
    <scope>NUCLEOTIDE SEQUENCE [LARGE SCALE GENOMIC DNA]</scope>
    <source>
        <strain>ATCC BAA-1437 / JCM 17883 / MC-1</strain>
    </source>
</reference>
<accession>A0L482</accession>
<dbReference type="EC" id="1.2.1.38" evidence="1"/>
<dbReference type="EMBL" id="CP000471">
    <property type="protein sequence ID" value="ABK42775.1"/>
    <property type="molecule type" value="Genomic_DNA"/>
</dbReference>
<dbReference type="RefSeq" id="WP_011711947.1">
    <property type="nucleotide sequence ID" value="NC_008576.1"/>
</dbReference>
<dbReference type="SMR" id="A0L482"/>
<dbReference type="STRING" id="156889.Mmc1_0248"/>
<dbReference type="KEGG" id="mgm:Mmc1_0248"/>
<dbReference type="eggNOG" id="COG0002">
    <property type="taxonomic scope" value="Bacteria"/>
</dbReference>
<dbReference type="HOGENOM" id="CLU_006384_0_1_5"/>
<dbReference type="OrthoDB" id="9801289at2"/>
<dbReference type="UniPathway" id="UPA00068">
    <property type="reaction ID" value="UER00108"/>
</dbReference>
<dbReference type="Proteomes" id="UP000002586">
    <property type="component" value="Chromosome"/>
</dbReference>
<dbReference type="GO" id="GO:0005737">
    <property type="term" value="C:cytoplasm"/>
    <property type="evidence" value="ECO:0007669"/>
    <property type="project" value="UniProtKB-SubCell"/>
</dbReference>
<dbReference type="GO" id="GO:0003942">
    <property type="term" value="F:N-acetyl-gamma-glutamyl-phosphate reductase activity"/>
    <property type="evidence" value="ECO:0007669"/>
    <property type="project" value="UniProtKB-UniRule"/>
</dbReference>
<dbReference type="GO" id="GO:0051287">
    <property type="term" value="F:NAD binding"/>
    <property type="evidence" value="ECO:0007669"/>
    <property type="project" value="InterPro"/>
</dbReference>
<dbReference type="GO" id="GO:0070401">
    <property type="term" value="F:NADP+ binding"/>
    <property type="evidence" value="ECO:0007669"/>
    <property type="project" value="InterPro"/>
</dbReference>
<dbReference type="GO" id="GO:0006526">
    <property type="term" value="P:L-arginine biosynthetic process"/>
    <property type="evidence" value="ECO:0007669"/>
    <property type="project" value="UniProtKB-UniRule"/>
</dbReference>
<dbReference type="CDD" id="cd23934">
    <property type="entry name" value="AGPR_1_C"/>
    <property type="match status" value="1"/>
</dbReference>
<dbReference type="CDD" id="cd17895">
    <property type="entry name" value="AGPR_1_N"/>
    <property type="match status" value="1"/>
</dbReference>
<dbReference type="FunFam" id="3.30.360.10:FF:000014">
    <property type="entry name" value="N-acetyl-gamma-glutamyl-phosphate reductase"/>
    <property type="match status" value="1"/>
</dbReference>
<dbReference type="Gene3D" id="3.30.360.10">
    <property type="entry name" value="Dihydrodipicolinate Reductase, domain 2"/>
    <property type="match status" value="1"/>
</dbReference>
<dbReference type="Gene3D" id="3.40.50.720">
    <property type="entry name" value="NAD(P)-binding Rossmann-like Domain"/>
    <property type="match status" value="1"/>
</dbReference>
<dbReference type="HAMAP" id="MF_00150">
    <property type="entry name" value="ArgC_type1"/>
    <property type="match status" value="1"/>
</dbReference>
<dbReference type="InterPro" id="IPR023013">
    <property type="entry name" value="AGPR_AS"/>
</dbReference>
<dbReference type="InterPro" id="IPR000706">
    <property type="entry name" value="AGPR_type-1"/>
</dbReference>
<dbReference type="InterPro" id="IPR036291">
    <property type="entry name" value="NAD(P)-bd_dom_sf"/>
</dbReference>
<dbReference type="InterPro" id="IPR050085">
    <property type="entry name" value="NAGSA_dehydrogenase"/>
</dbReference>
<dbReference type="InterPro" id="IPR000534">
    <property type="entry name" value="Semialdehyde_DH_NAD-bd"/>
</dbReference>
<dbReference type="NCBIfam" id="TIGR01850">
    <property type="entry name" value="argC"/>
    <property type="match status" value="1"/>
</dbReference>
<dbReference type="PANTHER" id="PTHR32338:SF10">
    <property type="entry name" value="N-ACETYL-GAMMA-GLUTAMYL-PHOSPHATE REDUCTASE, CHLOROPLASTIC-RELATED"/>
    <property type="match status" value="1"/>
</dbReference>
<dbReference type="PANTHER" id="PTHR32338">
    <property type="entry name" value="N-ACETYL-GAMMA-GLUTAMYL-PHOSPHATE REDUCTASE, CHLOROPLASTIC-RELATED-RELATED"/>
    <property type="match status" value="1"/>
</dbReference>
<dbReference type="Pfam" id="PF01118">
    <property type="entry name" value="Semialdhyde_dh"/>
    <property type="match status" value="1"/>
</dbReference>
<dbReference type="Pfam" id="PF22698">
    <property type="entry name" value="Semialdhyde_dhC_1"/>
    <property type="match status" value="1"/>
</dbReference>
<dbReference type="SMART" id="SM00859">
    <property type="entry name" value="Semialdhyde_dh"/>
    <property type="match status" value="1"/>
</dbReference>
<dbReference type="SUPFAM" id="SSF55347">
    <property type="entry name" value="Glyceraldehyde-3-phosphate dehydrogenase-like, C-terminal domain"/>
    <property type="match status" value="1"/>
</dbReference>
<dbReference type="SUPFAM" id="SSF51735">
    <property type="entry name" value="NAD(P)-binding Rossmann-fold domains"/>
    <property type="match status" value="1"/>
</dbReference>
<dbReference type="PROSITE" id="PS01224">
    <property type="entry name" value="ARGC"/>
    <property type="match status" value="1"/>
</dbReference>
<name>ARGC_MAGMM</name>
<keyword id="KW-0028">Amino-acid biosynthesis</keyword>
<keyword id="KW-0055">Arginine biosynthesis</keyword>
<keyword id="KW-0963">Cytoplasm</keyword>
<keyword id="KW-0521">NADP</keyword>
<keyword id="KW-0560">Oxidoreductase</keyword>
<keyword id="KW-1185">Reference proteome</keyword>
<organism>
    <name type="scientific">Magnetococcus marinus (strain ATCC BAA-1437 / JCM 17883 / MC-1)</name>
    <dbReference type="NCBI Taxonomy" id="156889"/>
    <lineage>
        <taxon>Bacteria</taxon>
        <taxon>Pseudomonadati</taxon>
        <taxon>Pseudomonadota</taxon>
        <taxon>Alphaproteobacteria</taxon>
        <taxon>Magnetococcales</taxon>
        <taxon>Magnetococcaceae</taxon>
        <taxon>Magnetococcus</taxon>
    </lineage>
</organism>
<proteinExistence type="inferred from homology"/>
<comment type="function">
    <text evidence="1">Catalyzes the NADPH-dependent reduction of N-acetyl-5-glutamyl phosphate to yield N-acetyl-L-glutamate 5-semialdehyde.</text>
</comment>
<comment type="catalytic activity">
    <reaction evidence="1">
        <text>N-acetyl-L-glutamate 5-semialdehyde + phosphate + NADP(+) = N-acetyl-L-glutamyl 5-phosphate + NADPH + H(+)</text>
        <dbReference type="Rhea" id="RHEA:21588"/>
        <dbReference type="ChEBI" id="CHEBI:15378"/>
        <dbReference type="ChEBI" id="CHEBI:29123"/>
        <dbReference type="ChEBI" id="CHEBI:43474"/>
        <dbReference type="ChEBI" id="CHEBI:57783"/>
        <dbReference type="ChEBI" id="CHEBI:57936"/>
        <dbReference type="ChEBI" id="CHEBI:58349"/>
        <dbReference type="EC" id="1.2.1.38"/>
    </reaction>
</comment>
<comment type="pathway">
    <text evidence="1">Amino-acid biosynthesis; L-arginine biosynthesis; N(2)-acetyl-L-ornithine from L-glutamate: step 3/4.</text>
</comment>
<comment type="subcellular location">
    <subcellularLocation>
        <location evidence="1">Cytoplasm</location>
    </subcellularLocation>
</comment>
<comment type="similarity">
    <text evidence="1">Belongs to the NAGSA dehydrogenase family. Type 1 subfamily.</text>
</comment>
<protein>
    <recommendedName>
        <fullName evidence="1">N-acetyl-gamma-glutamyl-phosphate reductase</fullName>
        <shortName evidence="1">AGPR</shortName>
        <ecNumber evidence="1">1.2.1.38</ecNumber>
    </recommendedName>
    <alternativeName>
        <fullName evidence="1">N-acetyl-glutamate semialdehyde dehydrogenase</fullName>
        <shortName evidence="1">NAGSA dehydrogenase</shortName>
    </alternativeName>
</protein>